<reference key="1">
    <citation type="journal article" date="2008" name="J. Bacteriol.">
        <title>Genome sequence of a nephritogenic and highly transformable M49 strain of Streptococcus pyogenes.</title>
        <authorList>
            <person name="McShan W.M."/>
            <person name="Ferretti J.J."/>
            <person name="Karasawa T."/>
            <person name="Suvorov A.N."/>
            <person name="Lin S."/>
            <person name="Qin B."/>
            <person name="Jia H."/>
            <person name="Kenton S."/>
            <person name="Najar F."/>
            <person name="Wu H."/>
            <person name="Scott J."/>
            <person name="Roe B.A."/>
            <person name="Savic D.J."/>
        </authorList>
    </citation>
    <scope>NUCLEOTIDE SEQUENCE [LARGE SCALE GENOMIC DNA]</scope>
    <source>
        <strain>NZ131</strain>
    </source>
</reference>
<gene>
    <name evidence="1" type="primary">truA</name>
    <name type="ordered locus">Spy49_1568c</name>
</gene>
<protein>
    <recommendedName>
        <fullName evidence="1">tRNA pseudouridine synthase A</fullName>
        <ecNumber evidence="1">5.4.99.12</ecNumber>
    </recommendedName>
    <alternativeName>
        <fullName evidence="1">tRNA pseudouridine(38-40) synthase</fullName>
    </alternativeName>
    <alternativeName>
        <fullName evidence="1">tRNA pseudouridylate synthase I</fullName>
    </alternativeName>
    <alternativeName>
        <fullName evidence="1">tRNA-uridine isomerase I</fullName>
    </alternativeName>
</protein>
<sequence length="249" mass="28356">MVRYKATISYDGTLFSGFQRQRHLRTVQEEIEKTLYKLNNGTKIIIHGAGRTDAGVHAYGQVIHFDLPQEQEVEKLRFALDTQTPEDIDVVNIEKVADDFHCRYQKHLKTYEFLVDNGRPKNPMMRHYTTHYPYTLNIKLMQEAINGLVGTHDFTGFTAAGTSVQNKVRTITKATVSRDEKTDFLVFTFSGNGFLYKQVRNMVGTLLKIGNGQMPVEQVKVILSSKNRQLAGPTISGNGLYLKEICYEN</sequence>
<name>TRUA_STRPZ</name>
<organism>
    <name type="scientific">Streptococcus pyogenes serotype M49 (strain NZ131)</name>
    <dbReference type="NCBI Taxonomy" id="471876"/>
    <lineage>
        <taxon>Bacteria</taxon>
        <taxon>Bacillati</taxon>
        <taxon>Bacillota</taxon>
        <taxon>Bacilli</taxon>
        <taxon>Lactobacillales</taxon>
        <taxon>Streptococcaceae</taxon>
        <taxon>Streptococcus</taxon>
    </lineage>
</organism>
<keyword id="KW-0413">Isomerase</keyword>
<keyword id="KW-0819">tRNA processing</keyword>
<comment type="function">
    <text evidence="1">Formation of pseudouridine at positions 38, 39 and 40 in the anticodon stem and loop of transfer RNAs.</text>
</comment>
<comment type="catalytic activity">
    <reaction evidence="1">
        <text>uridine(38/39/40) in tRNA = pseudouridine(38/39/40) in tRNA</text>
        <dbReference type="Rhea" id="RHEA:22376"/>
        <dbReference type="Rhea" id="RHEA-COMP:10085"/>
        <dbReference type="Rhea" id="RHEA-COMP:10087"/>
        <dbReference type="ChEBI" id="CHEBI:65314"/>
        <dbReference type="ChEBI" id="CHEBI:65315"/>
        <dbReference type="EC" id="5.4.99.12"/>
    </reaction>
</comment>
<comment type="subunit">
    <text evidence="1">Homodimer.</text>
</comment>
<comment type="similarity">
    <text evidence="1">Belongs to the tRNA pseudouridine synthase TruA family.</text>
</comment>
<feature type="chain" id="PRO_1000097794" description="tRNA pseudouridine synthase A">
    <location>
        <begin position="1"/>
        <end position="249"/>
    </location>
</feature>
<feature type="active site" description="Nucleophile" evidence="1">
    <location>
        <position position="53"/>
    </location>
</feature>
<feature type="binding site" evidence="1">
    <location>
        <position position="111"/>
    </location>
    <ligand>
        <name>substrate</name>
    </ligand>
</feature>
<accession>B5XIG6</accession>
<evidence type="ECO:0000255" key="1">
    <source>
        <dbReference type="HAMAP-Rule" id="MF_00171"/>
    </source>
</evidence>
<dbReference type="EC" id="5.4.99.12" evidence="1"/>
<dbReference type="EMBL" id="CP000829">
    <property type="protein sequence ID" value="ACI61828.1"/>
    <property type="molecule type" value="Genomic_DNA"/>
</dbReference>
<dbReference type="SMR" id="B5XIG6"/>
<dbReference type="KEGG" id="soz:Spy49_1568c"/>
<dbReference type="HOGENOM" id="CLU_014673_0_1_9"/>
<dbReference type="Proteomes" id="UP000001039">
    <property type="component" value="Chromosome"/>
</dbReference>
<dbReference type="GO" id="GO:0003723">
    <property type="term" value="F:RNA binding"/>
    <property type="evidence" value="ECO:0007669"/>
    <property type="project" value="InterPro"/>
</dbReference>
<dbReference type="GO" id="GO:0160147">
    <property type="term" value="F:tRNA pseudouridine(38-40) synthase activity"/>
    <property type="evidence" value="ECO:0007669"/>
    <property type="project" value="UniProtKB-EC"/>
</dbReference>
<dbReference type="GO" id="GO:0031119">
    <property type="term" value="P:tRNA pseudouridine synthesis"/>
    <property type="evidence" value="ECO:0007669"/>
    <property type="project" value="UniProtKB-UniRule"/>
</dbReference>
<dbReference type="CDD" id="cd02570">
    <property type="entry name" value="PseudoU_synth_EcTruA"/>
    <property type="match status" value="1"/>
</dbReference>
<dbReference type="FunFam" id="3.30.70.580:FF:000001">
    <property type="entry name" value="tRNA pseudouridine synthase A"/>
    <property type="match status" value="1"/>
</dbReference>
<dbReference type="Gene3D" id="3.30.70.660">
    <property type="entry name" value="Pseudouridine synthase I, catalytic domain, C-terminal subdomain"/>
    <property type="match status" value="1"/>
</dbReference>
<dbReference type="Gene3D" id="3.30.70.580">
    <property type="entry name" value="Pseudouridine synthase I, catalytic domain, N-terminal subdomain"/>
    <property type="match status" value="1"/>
</dbReference>
<dbReference type="HAMAP" id="MF_00171">
    <property type="entry name" value="TruA"/>
    <property type="match status" value="1"/>
</dbReference>
<dbReference type="InterPro" id="IPR020103">
    <property type="entry name" value="PsdUridine_synth_cat_dom_sf"/>
</dbReference>
<dbReference type="InterPro" id="IPR001406">
    <property type="entry name" value="PsdUridine_synth_TruA"/>
</dbReference>
<dbReference type="InterPro" id="IPR020097">
    <property type="entry name" value="PsdUridine_synth_TruA_a/b_dom"/>
</dbReference>
<dbReference type="InterPro" id="IPR020095">
    <property type="entry name" value="PsdUridine_synth_TruA_C"/>
</dbReference>
<dbReference type="InterPro" id="IPR020094">
    <property type="entry name" value="TruA/RsuA/RluB/E/F_N"/>
</dbReference>
<dbReference type="NCBIfam" id="TIGR00071">
    <property type="entry name" value="hisT_truA"/>
    <property type="match status" value="1"/>
</dbReference>
<dbReference type="PANTHER" id="PTHR11142">
    <property type="entry name" value="PSEUDOURIDYLATE SYNTHASE"/>
    <property type="match status" value="1"/>
</dbReference>
<dbReference type="PANTHER" id="PTHR11142:SF0">
    <property type="entry name" value="TRNA PSEUDOURIDINE SYNTHASE-LIKE 1"/>
    <property type="match status" value="1"/>
</dbReference>
<dbReference type="Pfam" id="PF01416">
    <property type="entry name" value="PseudoU_synth_1"/>
    <property type="match status" value="2"/>
</dbReference>
<dbReference type="PIRSF" id="PIRSF001430">
    <property type="entry name" value="tRNA_psdUrid_synth"/>
    <property type="match status" value="1"/>
</dbReference>
<dbReference type="SUPFAM" id="SSF55120">
    <property type="entry name" value="Pseudouridine synthase"/>
    <property type="match status" value="1"/>
</dbReference>
<proteinExistence type="inferred from homology"/>